<dbReference type="EC" id="5.3.1.5" evidence="1"/>
<dbReference type="EMBL" id="CP001063">
    <property type="protein sequence ID" value="ACD08851.1"/>
    <property type="molecule type" value="Genomic_DNA"/>
</dbReference>
<dbReference type="RefSeq" id="WP_001149581.1">
    <property type="nucleotide sequence ID" value="NC_010658.1"/>
</dbReference>
<dbReference type="SMR" id="B2U560"/>
<dbReference type="STRING" id="344609.SbBS512_E3959"/>
<dbReference type="GeneID" id="93778299"/>
<dbReference type="KEGG" id="sbc:SbBS512_E3959"/>
<dbReference type="HOGENOM" id="CLU_037261_1_0_6"/>
<dbReference type="Proteomes" id="UP000001030">
    <property type="component" value="Chromosome"/>
</dbReference>
<dbReference type="GO" id="GO:0005737">
    <property type="term" value="C:cytoplasm"/>
    <property type="evidence" value="ECO:0007669"/>
    <property type="project" value="UniProtKB-SubCell"/>
</dbReference>
<dbReference type="GO" id="GO:0000287">
    <property type="term" value="F:magnesium ion binding"/>
    <property type="evidence" value="ECO:0007669"/>
    <property type="project" value="UniProtKB-UniRule"/>
</dbReference>
<dbReference type="GO" id="GO:0009045">
    <property type="term" value="F:xylose isomerase activity"/>
    <property type="evidence" value="ECO:0007669"/>
    <property type="project" value="UniProtKB-UniRule"/>
</dbReference>
<dbReference type="GO" id="GO:0042732">
    <property type="term" value="P:D-xylose metabolic process"/>
    <property type="evidence" value="ECO:0007669"/>
    <property type="project" value="UniProtKB-UniRule"/>
</dbReference>
<dbReference type="FunFam" id="3.20.20.150:FF:000002">
    <property type="entry name" value="Xylose isomerase"/>
    <property type="match status" value="1"/>
</dbReference>
<dbReference type="Gene3D" id="3.20.20.150">
    <property type="entry name" value="Divalent-metal-dependent TIM barrel enzymes"/>
    <property type="match status" value="1"/>
</dbReference>
<dbReference type="HAMAP" id="MF_00455">
    <property type="entry name" value="Xylose_isom_A"/>
    <property type="match status" value="1"/>
</dbReference>
<dbReference type="InterPro" id="IPR036237">
    <property type="entry name" value="Xyl_isomerase-like_sf"/>
</dbReference>
<dbReference type="InterPro" id="IPR013452">
    <property type="entry name" value="Xylose_isom_bac"/>
</dbReference>
<dbReference type="InterPro" id="IPR001998">
    <property type="entry name" value="Xylose_isomerase"/>
</dbReference>
<dbReference type="NCBIfam" id="NF003998">
    <property type="entry name" value="PRK05474.1"/>
    <property type="match status" value="1"/>
</dbReference>
<dbReference type="NCBIfam" id="TIGR02630">
    <property type="entry name" value="xylose_isom_A"/>
    <property type="match status" value="1"/>
</dbReference>
<dbReference type="PANTHER" id="PTHR48408">
    <property type="match status" value="1"/>
</dbReference>
<dbReference type="PANTHER" id="PTHR48408:SF1">
    <property type="entry name" value="XYLOSE ISOMERASE"/>
    <property type="match status" value="1"/>
</dbReference>
<dbReference type="PRINTS" id="PR00688">
    <property type="entry name" value="XYLOSISMRASE"/>
</dbReference>
<dbReference type="SUPFAM" id="SSF51658">
    <property type="entry name" value="Xylose isomerase-like"/>
    <property type="match status" value="1"/>
</dbReference>
<dbReference type="PROSITE" id="PS51415">
    <property type="entry name" value="XYLOSE_ISOMERASE"/>
    <property type="match status" value="1"/>
</dbReference>
<protein>
    <recommendedName>
        <fullName evidence="1">Xylose isomerase</fullName>
        <ecNumber evidence="1">5.3.1.5</ecNumber>
    </recommendedName>
</protein>
<feature type="chain" id="PRO_1000200311" description="Xylose isomerase">
    <location>
        <begin position="1"/>
        <end position="440"/>
    </location>
</feature>
<feature type="active site" evidence="1">
    <location>
        <position position="101"/>
    </location>
</feature>
<feature type="active site" evidence="1">
    <location>
        <position position="104"/>
    </location>
</feature>
<feature type="binding site" evidence="1">
    <location>
        <position position="232"/>
    </location>
    <ligand>
        <name>Mg(2+)</name>
        <dbReference type="ChEBI" id="CHEBI:18420"/>
        <label>1</label>
    </ligand>
</feature>
<feature type="binding site" evidence="1">
    <location>
        <position position="268"/>
    </location>
    <ligand>
        <name>Mg(2+)</name>
        <dbReference type="ChEBI" id="CHEBI:18420"/>
        <label>1</label>
    </ligand>
</feature>
<feature type="binding site" evidence="1">
    <location>
        <position position="268"/>
    </location>
    <ligand>
        <name>Mg(2+)</name>
        <dbReference type="ChEBI" id="CHEBI:18420"/>
        <label>2</label>
    </ligand>
</feature>
<feature type="binding site" evidence="1">
    <location>
        <position position="271"/>
    </location>
    <ligand>
        <name>Mg(2+)</name>
        <dbReference type="ChEBI" id="CHEBI:18420"/>
        <label>2</label>
    </ligand>
</feature>
<feature type="binding site" evidence="1">
    <location>
        <position position="296"/>
    </location>
    <ligand>
        <name>Mg(2+)</name>
        <dbReference type="ChEBI" id="CHEBI:18420"/>
        <label>1</label>
    </ligand>
</feature>
<feature type="binding site" evidence="1">
    <location>
        <position position="307"/>
    </location>
    <ligand>
        <name>Mg(2+)</name>
        <dbReference type="ChEBI" id="CHEBI:18420"/>
        <label>2</label>
    </ligand>
</feature>
<feature type="binding site" evidence="1">
    <location>
        <position position="309"/>
    </location>
    <ligand>
        <name>Mg(2+)</name>
        <dbReference type="ChEBI" id="CHEBI:18420"/>
        <label>2</label>
    </ligand>
</feature>
<feature type="binding site" evidence="1">
    <location>
        <position position="339"/>
    </location>
    <ligand>
        <name>Mg(2+)</name>
        <dbReference type="ChEBI" id="CHEBI:18420"/>
        <label>1</label>
    </ligand>
</feature>
<comment type="catalytic activity">
    <reaction evidence="1">
        <text>alpha-D-xylose = alpha-D-xylulofuranose</text>
        <dbReference type="Rhea" id="RHEA:22816"/>
        <dbReference type="ChEBI" id="CHEBI:28518"/>
        <dbReference type="ChEBI" id="CHEBI:188998"/>
        <dbReference type="EC" id="5.3.1.5"/>
    </reaction>
</comment>
<comment type="cofactor">
    <cofactor evidence="1">
        <name>Mg(2+)</name>
        <dbReference type="ChEBI" id="CHEBI:18420"/>
    </cofactor>
    <text evidence="1">Binds 2 magnesium ions per subunit.</text>
</comment>
<comment type="subunit">
    <text evidence="1">Homotetramer.</text>
</comment>
<comment type="subcellular location">
    <subcellularLocation>
        <location evidence="1">Cytoplasm</location>
    </subcellularLocation>
</comment>
<comment type="similarity">
    <text evidence="1">Belongs to the xylose isomerase family.</text>
</comment>
<accession>B2U560</accession>
<name>XYLA_SHIB3</name>
<reference key="1">
    <citation type="submission" date="2008-05" db="EMBL/GenBank/DDBJ databases">
        <title>Complete sequence of Shigella boydii serotype 18 strain BS512.</title>
        <authorList>
            <person name="Rasko D.A."/>
            <person name="Rosovitz M."/>
            <person name="Maurelli A.T."/>
            <person name="Myers G."/>
            <person name="Seshadri R."/>
            <person name="Cer R."/>
            <person name="Jiang L."/>
            <person name="Ravel J."/>
            <person name="Sebastian Y."/>
        </authorList>
    </citation>
    <scope>NUCLEOTIDE SEQUENCE [LARGE SCALE GENOMIC DNA]</scope>
    <source>
        <strain>CDC 3083-94 / BS512</strain>
    </source>
</reference>
<proteinExistence type="inferred from homology"/>
<sequence>MQAYFDQLDRVRYEGSKSSNPLAFRHYNPDELVLGKRMEEHLRFAACYWHTFCWNGADMFGVGAFNRPWQQPGEALALAKRKADVAFEFFHKLHVPFYCFHDVDVSPEGASLKEYINNFAQMVDVLAAKQEESGVKLLWGTANCFTNPRYGAGAATNPDPEVFSWAATQVVTAMEATHKLGGENYVLWGGREGYETLLNTDLRQEREQLGRFMQMVVEHKHKIGFQGTLLIEPKPQEPTKHQYDYDAATVYGFLKQFGLEKEIKLNIEANHATLAGHSFHHEIATAIALGLFGSVDANRGDAQLGWDTDQFPNSVEENALVMYEILKAGGFTTGGLNFDAKVRRQSTDKYDLFYGHIGAMDTMALALKIAARMIEDGELDKRIAQRYSGWNSELGQQILKGQMSLADLAKYAQEHNLSPVHQSGRQEQLENLVNHYLFDK</sequence>
<organism>
    <name type="scientific">Shigella boydii serotype 18 (strain CDC 3083-94 / BS512)</name>
    <dbReference type="NCBI Taxonomy" id="344609"/>
    <lineage>
        <taxon>Bacteria</taxon>
        <taxon>Pseudomonadati</taxon>
        <taxon>Pseudomonadota</taxon>
        <taxon>Gammaproteobacteria</taxon>
        <taxon>Enterobacterales</taxon>
        <taxon>Enterobacteriaceae</taxon>
        <taxon>Shigella</taxon>
    </lineage>
</organism>
<keyword id="KW-0119">Carbohydrate metabolism</keyword>
<keyword id="KW-0963">Cytoplasm</keyword>
<keyword id="KW-0413">Isomerase</keyword>
<keyword id="KW-0460">Magnesium</keyword>
<keyword id="KW-0479">Metal-binding</keyword>
<keyword id="KW-1185">Reference proteome</keyword>
<keyword id="KW-0859">Xylose metabolism</keyword>
<evidence type="ECO:0000255" key="1">
    <source>
        <dbReference type="HAMAP-Rule" id="MF_00455"/>
    </source>
</evidence>
<gene>
    <name evidence="1" type="primary">xylA</name>
    <name type="ordered locus">SbBS512_E3959</name>
</gene>